<evidence type="ECO:0000255" key="1">
    <source>
        <dbReference type="HAMAP-Rule" id="MF_00451"/>
    </source>
</evidence>
<proteinExistence type="inferred from homology"/>
<reference key="1">
    <citation type="journal article" date="2011" name="MBio">
        <title>Novel metabolic attributes of the genus Cyanothece, comprising a group of unicellular nitrogen-fixing Cyanobacteria.</title>
        <authorList>
            <person name="Bandyopadhyay A."/>
            <person name="Elvitigala T."/>
            <person name="Welsh E."/>
            <person name="Stockel J."/>
            <person name="Liberton M."/>
            <person name="Min H."/>
            <person name="Sherman L.A."/>
            <person name="Pakrasi H.B."/>
        </authorList>
    </citation>
    <scope>NUCLEOTIDE SEQUENCE [LARGE SCALE GENOMIC DNA]</scope>
    <source>
        <strain>PCC 7425 / ATCC 29141</strain>
    </source>
</reference>
<gene>
    <name evidence="1" type="primary">ndk</name>
    <name type="ordered locus">Cyan7425_3912</name>
</gene>
<accession>B8HUM7</accession>
<name>NDK_CYAP4</name>
<feature type="chain" id="PRO_1000135248" description="Nucleoside diphosphate kinase">
    <location>
        <begin position="1"/>
        <end position="149"/>
    </location>
</feature>
<feature type="active site" description="Pros-phosphohistidine intermediate" evidence="1">
    <location>
        <position position="115"/>
    </location>
</feature>
<feature type="binding site" evidence="1">
    <location>
        <position position="9"/>
    </location>
    <ligand>
        <name>ATP</name>
        <dbReference type="ChEBI" id="CHEBI:30616"/>
    </ligand>
</feature>
<feature type="binding site" evidence="1">
    <location>
        <position position="57"/>
    </location>
    <ligand>
        <name>ATP</name>
        <dbReference type="ChEBI" id="CHEBI:30616"/>
    </ligand>
</feature>
<feature type="binding site" evidence="1">
    <location>
        <position position="85"/>
    </location>
    <ligand>
        <name>ATP</name>
        <dbReference type="ChEBI" id="CHEBI:30616"/>
    </ligand>
</feature>
<feature type="binding site" evidence="1">
    <location>
        <position position="91"/>
    </location>
    <ligand>
        <name>ATP</name>
        <dbReference type="ChEBI" id="CHEBI:30616"/>
    </ligand>
</feature>
<feature type="binding site" evidence="1">
    <location>
        <position position="102"/>
    </location>
    <ligand>
        <name>ATP</name>
        <dbReference type="ChEBI" id="CHEBI:30616"/>
    </ligand>
</feature>
<feature type="binding site" evidence="1">
    <location>
        <position position="112"/>
    </location>
    <ligand>
        <name>ATP</name>
        <dbReference type="ChEBI" id="CHEBI:30616"/>
    </ligand>
</feature>
<keyword id="KW-0067">ATP-binding</keyword>
<keyword id="KW-0963">Cytoplasm</keyword>
<keyword id="KW-0418">Kinase</keyword>
<keyword id="KW-0460">Magnesium</keyword>
<keyword id="KW-0479">Metal-binding</keyword>
<keyword id="KW-0546">Nucleotide metabolism</keyword>
<keyword id="KW-0547">Nucleotide-binding</keyword>
<keyword id="KW-0597">Phosphoprotein</keyword>
<keyword id="KW-0808">Transferase</keyword>
<protein>
    <recommendedName>
        <fullName evidence="1">Nucleoside diphosphate kinase</fullName>
        <shortName evidence="1">NDK</shortName>
        <shortName evidence="1">NDP kinase</shortName>
        <ecNumber evidence="1">2.7.4.6</ecNumber>
    </recommendedName>
    <alternativeName>
        <fullName evidence="1">Nucleoside-2-P kinase</fullName>
    </alternativeName>
</protein>
<sequence length="149" mass="16522">MERTFLAVKPDGVQRALVGEIIRRFEAKGFKLVGLKLMNVSKDLAEQHYGEHKEKPFFPGLVQFITSGPVVAMVWEGKGVVASARKIIGATNPLNSEPGTIRGDYGVDIGRNIIHGSDAVETAQREIALWFQPAELVSWEPTLTSWIYE</sequence>
<organism>
    <name type="scientific">Cyanothece sp. (strain PCC 7425 / ATCC 29141)</name>
    <dbReference type="NCBI Taxonomy" id="395961"/>
    <lineage>
        <taxon>Bacteria</taxon>
        <taxon>Bacillati</taxon>
        <taxon>Cyanobacteriota</taxon>
        <taxon>Cyanophyceae</taxon>
        <taxon>Gomontiellales</taxon>
        <taxon>Cyanothecaceae</taxon>
        <taxon>Cyanothece</taxon>
    </lineage>
</organism>
<dbReference type="EC" id="2.7.4.6" evidence="1"/>
<dbReference type="EMBL" id="CP001344">
    <property type="protein sequence ID" value="ACL46229.1"/>
    <property type="molecule type" value="Genomic_DNA"/>
</dbReference>
<dbReference type="SMR" id="B8HUM7"/>
<dbReference type="STRING" id="395961.Cyan7425_3912"/>
<dbReference type="KEGG" id="cyn:Cyan7425_3912"/>
<dbReference type="eggNOG" id="COG0105">
    <property type="taxonomic scope" value="Bacteria"/>
</dbReference>
<dbReference type="HOGENOM" id="CLU_060216_6_3_3"/>
<dbReference type="OrthoDB" id="9801161at2"/>
<dbReference type="GO" id="GO:0005737">
    <property type="term" value="C:cytoplasm"/>
    <property type="evidence" value="ECO:0007669"/>
    <property type="project" value="UniProtKB-SubCell"/>
</dbReference>
<dbReference type="GO" id="GO:0005524">
    <property type="term" value="F:ATP binding"/>
    <property type="evidence" value="ECO:0007669"/>
    <property type="project" value="UniProtKB-UniRule"/>
</dbReference>
<dbReference type="GO" id="GO:0046872">
    <property type="term" value="F:metal ion binding"/>
    <property type="evidence" value="ECO:0007669"/>
    <property type="project" value="UniProtKB-KW"/>
</dbReference>
<dbReference type="GO" id="GO:0004550">
    <property type="term" value="F:nucleoside diphosphate kinase activity"/>
    <property type="evidence" value="ECO:0007669"/>
    <property type="project" value="UniProtKB-UniRule"/>
</dbReference>
<dbReference type="GO" id="GO:0006241">
    <property type="term" value="P:CTP biosynthetic process"/>
    <property type="evidence" value="ECO:0007669"/>
    <property type="project" value="UniProtKB-UniRule"/>
</dbReference>
<dbReference type="GO" id="GO:0006183">
    <property type="term" value="P:GTP biosynthetic process"/>
    <property type="evidence" value="ECO:0007669"/>
    <property type="project" value="UniProtKB-UniRule"/>
</dbReference>
<dbReference type="GO" id="GO:0006228">
    <property type="term" value="P:UTP biosynthetic process"/>
    <property type="evidence" value="ECO:0007669"/>
    <property type="project" value="UniProtKB-UniRule"/>
</dbReference>
<dbReference type="CDD" id="cd04413">
    <property type="entry name" value="NDPk_I"/>
    <property type="match status" value="1"/>
</dbReference>
<dbReference type="FunFam" id="3.30.70.141:FF:000002">
    <property type="entry name" value="Nucleoside diphosphate kinase"/>
    <property type="match status" value="1"/>
</dbReference>
<dbReference type="Gene3D" id="3.30.70.141">
    <property type="entry name" value="Nucleoside diphosphate kinase-like domain"/>
    <property type="match status" value="1"/>
</dbReference>
<dbReference type="HAMAP" id="MF_00451">
    <property type="entry name" value="NDP_kinase"/>
    <property type="match status" value="1"/>
</dbReference>
<dbReference type="InterPro" id="IPR034907">
    <property type="entry name" value="NDK-like_dom"/>
</dbReference>
<dbReference type="InterPro" id="IPR036850">
    <property type="entry name" value="NDK-like_dom_sf"/>
</dbReference>
<dbReference type="InterPro" id="IPR001564">
    <property type="entry name" value="Nucleoside_diP_kinase"/>
</dbReference>
<dbReference type="InterPro" id="IPR023005">
    <property type="entry name" value="Nucleoside_diP_kinase_AS"/>
</dbReference>
<dbReference type="NCBIfam" id="NF001908">
    <property type="entry name" value="PRK00668.1"/>
    <property type="match status" value="1"/>
</dbReference>
<dbReference type="PANTHER" id="PTHR11349">
    <property type="entry name" value="NUCLEOSIDE DIPHOSPHATE KINASE"/>
    <property type="match status" value="1"/>
</dbReference>
<dbReference type="Pfam" id="PF00334">
    <property type="entry name" value="NDK"/>
    <property type="match status" value="1"/>
</dbReference>
<dbReference type="PRINTS" id="PR01243">
    <property type="entry name" value="NUCDPKINASE"/>
</dbReference>
<dbReference type="SMART" id="SM00562">
    <property type="entry name" value="NDK"/>
    <property type="match status" value="1"/>
</dbReference>
<dbReference type="SUPFAM" id="SSF54919">
    <property type="entry name" value="Nucleoside diphosphate kinase, NDK"/>
    <property type="match status" value="1"/>
</dbReference>
<dbReference type="PROSITE" id="PS00469">
    <property type="entry name" value="NDPK"/>
    <property type="match status" value="1"/>
</dbReference>
<dbReference type="PROSITE" id="PS51374">
    <property type="entry name" value="NDPK_LIKE"/>
    <property type="match status" value="1"/>
</dbReference>
<comment type="function">
    <text evidence="1">Major role in the synthesis of nucleoside triphosphates other than ATP. The ATP gamma phosphate is transferred to the NDP beta phosphate via a ping-pong mechanism, using a phosphorylated active-site intermediate.</text>
</comment>
<comment type="catalytic activity">
    <reaction evidence="1">
        <text>a 2'-deoxyribonucleoside 5'-diphosphate + ATP = a 2'-deoxyribonucleoside 5'-triphosphate + ADP</text>
        <dbReference type="Rhea" id="RHEA:44640"/>
        <dbReference type="ChEBI" id="CHEBI:30616"/>
        <dbReference type="ChEBI" id="CHEBI:61560"/>
        <dbReference type="ChEBI" id="CHEBI:73316"/>
        <dbReference type="ChEBI" id="CHEBI:456216"/>
        <dbReference type="EC" id="2.7.4.6"/>
    </reaction>
</comment>
<comment type="catalytic activity">
    <reaction evidence="1">
        <text>a ribonucleoside 5'-diphosphate + ATP = a ribonucleoside 5'-triphosphate + ADP</text>
        <dbReference type="Rhea" id="RHEA:18113"/>
        <dbReference type="ChEBI" id="CHEBI:30616"/>
        <dbReference type="ChEBI" id="CHEBI:57930"/>
        <dbReference type="ChEBI" id="CHEBI:61557"/>
        <dbReference type="ChEBI" id="CHEBI:456216"/>
        <dbReference type="EC" id="2.7.4.6"/>
    </reaction>
</comment>
<comment type="cofactor">
    <cofactor evidence="1">
        <name>Mg(2+)</name>
        <dbReference type="ChEBI" id="CHEBI:18420"/>
    </cofactor>
</comment>
<comment type="subunit">
    <text evidence="1">Homotetramer.</text>
</comment>
<comment type="subcellular location">
    <subcellularLocation>
        <location evidence="1">Cytoplasm</location>
    </subcellularLocation>
</comment>
<comment type="similarity">
    <text evidence="1">Belongs to the NDK family.</text>
</comment>